<accession>Q7KML2</accession>
<accession>Q95ST5</accession>
<dbReference type="EC" id="1.3.3.6" evidence="5"/>
<dbReference type="EMBL" id="AE013599">
    <property type="protein sequence ID" value="AAF57794.1"/>
    <property type="molecule type" value="Genomic_DNA"/>
</dbReference>
<dbReference type="EMBL" id="AF145642">
    <property type="protein sequence ID" value="AAD38617.1"/>
    <property type="molecule type" value="mRNA"/>
</dbReference>
<dbReference type="EMBL" id="AY060596">
    <property type="protein sequence ID" value="AAL28144.1"/>
    <property type="molecule type" value="mRNA"/>
</dbReference>
<dbReference type="RefSeq" id="NP_611264.2">
    <property type="nucleotide sequence ID" value="NM_137420.3"/>
</dbReference>
<dbReference type="SMR" id="Q7KML2"/>
<dbReference type="BioGRID" id="62713">
    <property type="interactions" value="60"/>
</dbReference>
<dbReference type="DIP" id="DIP-18503N"/>
<dbReference type="FunCoup" id="Q7KML2">
    <property type="interactions" value="1707"/>
</dbReference>
<dbReference type="IntAct" id="Q7KML2">
    <property type="interactions" value="27"/>
</dbReference>
<dbReference type="STRING" id="7227.FBpp0088517"/>
<dbReference type="iPTMnet" id="Q7KML2"/>
<dbReference type="PaxDb" id="7227-FBpp0088517"/>
<dbReference type="DNASU" id="37028"/>
<dbReference type="EnsemblMetazoa" id="FBtr0089548">
    <property type="protein sequence ID" value="FBpp0088517"/>
    <property type="gene ID" value="FBgn0027572"/>
</dbReference>
<dbReference type="GeneID" id="37028"/>
<dbReference type="KEGG" id="dme:Dmel_CG5009"/>
<dbReference type="UCSC" id="CG5009-RA">
    <property type="organism name" value="d. melanogaster"/>
</dbReference>
<dbReference type="AGR" id="FB:FBgn0027572"/>
<dbReference type="CTD" id="51"/>
<dbReference type="FlyBase" id="FBgn0027572">
    <property type="gene designation" value="Acox1"/>
</dbReference>
<dbReference type="VEuPathDB" id="VectorBase:FBgn0027572"/>
<dbReference type="eggNOG" id="KOG0136">
    <property type="taxonomic scope" value="Eukaryota"/>
</dbReference>
<dbReference type="GeneTree" id="ENSGT00940000166003"/>
<dbReference type="HOGENOM" id="CLU_014629_3_1_1"/>
<dbReference type="InParanoid" id="Q7KML2"/>
<dbReference type="OMA" id="WNMYNVL"/>
<dbReference type="OrthoDB" id="538336at2759"/>
<dbReference type="PhylomeDB" id="Q7KML2"/>
<dbReference type="Reactome" id="R-DME-193368">
    <property type="pathway name" value="Synthesis of bile acids and bile salts via 7alpha-hydroxycholesterol"/>
</dbReference>
<dbReference type="Reactome" id="R-DME-2046106">
    <property type="pathway name" value="alpha-linolenic acid (ALA) metabolism"/>
</dbReference>
<dbReference type="Reactome" id="R-DME-389887">
    <property type="pathway name" value="Beta-oxidation of pristanoyl-CoA"/>
</dbReference>
<dbReference type="Reactome" id="R-DME-390247">
    <property type="pathway name" value="Beta-oxidation of very long chain fatty acids"/>
</dbReference>
<dbReference type="Reactome" id="R-DME-9033241">
    <property type="pathway name" value="Peroxisomal protein import"/>
</dbReference>
<dbReference type="UniPathway" id="UPA00661"/>
<dbReference type="BioGRID-ORCS" id="37028">
    <property type="hits" value="0 hits in 3 CRISPR screens"/>
</dbReference>
<dbReference type="GenomeRNAi" id="37028"/>
<dbReference type="PRO" id="PR:Q7KML2"/>
<dbReference type="Proteomes" id="UP000000803">
    <property type="component" value="Chromosome 2R"/>
</dbReference>
<dbReference type="Bgee" id="FBgn0027572">
    <property type="expression patterns" value="Expressed in capitellum (Drosophila) and 123 other cell types or tissues"/>
</dbReference>
<dbReference type="ExpressionAtlas" id="Q7KML2">
    <property type="expression patterns" value="baseline and differential"/>
</dbReference>
<dbReference type="GO" id="GO:0005634">
    <property type="term" value="C:nucleus"/>
    <property type="evidence" value="ECO:0007669"/>
    <property type="project" value="UniProtKB-SubCell"/>
</dbReference>
<dbReference type="GO" id="GO:0005777">
    <property type="term" value="C:peroxisome"/>
    <property type="evidence" value="ECO:0000250"/>
    <property type="project" value="UniProtKB"/>
</dbReference>
<dbReference type="GO" id="GO:0003997">
    <property type="term" value="F:acyl-CoA oxidase activity"/>
    <property type="evidence" value="ECO:0000250"/>
    <property type="project" value="UniProtKB"/>
</dbReference>
<dbReference type="GO" id="GO:0071949">
    <property type="term" value="F:FAD binding"/>
    <property type="evidence" value="ECO:0007669"/>
    <property type="project" value="InterPro"/>
</dbReference>
<dbReference type="GO" id="GO:0005504">
    <property type="term" value="F:fatty acid binding"/>
    <property type="evidence" value="ECO:0000318"/>
    <property type="project" value="GO_Central"/>
</dbReference>
<dbReference type="GO" id="GO:0050660">
    <property type="term" value="F:flavin adenine dinucleotide binding"/>
    <property type="evidence" value="ECO:0000318"/>
    <property type="project" value="GO_Central"/>
</dbReference>
<dbReference type="GO" id="GO:0042803">
    <property type="term" value="F:protein homodimerization activity"/>
    <property type="evidence" value="ECO:0000314"/>
    <property type="project" value="UniProtKB"/>
</dbReference>
<dbReference type="GO" id="GO:0006635">
    <property type="term" value="P:fatty acid beta-oxidation"/>
    <property type="evidence" value="ECO:0000250"/>
    <property type="project" value="FlyBase"/>
</dbReference>
<dbReference type="GO" id="GO:0033540">
    <property type="term" value="P:fatty acid beta-oxidation using acyl-CoA oxidase"/>
    <property type="evidence" value="ECO:0000315"/>
    <property type="project" value="FlyBase"/>
</dbReference>
<dbReference type="GO" id="GO:0009062">
    <property type="term" value="P:fatty acid catabolic process"/>
    <property type="evidence" value="ECO:0000315"/>
    <property type="project" value="FlyBase"/>
</dbReference>
<dbReference type="GO" id="GO:0019395">
    <property type="term" value="P:fatty acid oxidation"/>
    <property type="evidence" value="ECO:0000250"/>
    <property type="project" value="UniProtKB"/>
</dbReference>
<dbReference type="GO" id="GO:0006091">
    <property type="term" value="P:generation of precursor metabolites and energy"/>
    <property type="evidence" value="ECO:0000250"/>
    <property type="project" value="UniProtKB"/>
</dbReference>
<dbReference type="GO" id="GO:0050665">
    <property type="term" value="P:hydrogen peroxide biosynthetic process"/>
    <property type="evidence" value="ECO:0000315"/>
    <property type="project" value="FlyBase"/>
</dbReference>
<dbReference type="GO" id="GO:0006629">
    <property type="term" value="P:lipid metabolic process"/>
    <property type="evidence" value="ECO:0000250"/>
    <property type="project" value="UniProtKB"/>
</dbReference>
<dbReference type="GO" id="GO:0006693">
    <property type="term" value="P:prostaglandin metabolic process"/>
    <property type="evidence" value="ECO:0000250"/>
    <property type="project" value="UniProtKB"/>
</dbReference>
<dbReference type="GO" id="GO:0140493">
    <property type="term" value="P:very long-chain fatty acid beta-oxidation"/>
    <property type="evidence" value="ECO:0000315"/>
    <property type="project" value="FlyBase"/>
</dbReference>
<dbReference type="CDD" id="cd01150">
    <property type="entry name" value="AXO"/>
    <property type="match status" value="1"/>
</dbReference>
<dbReference type="FunFam" id="1.10.540.10:FF:000033">
    <property type="entry name" value="Acyl-coenzyme A oxidase"/>
    <property type="match status" value="1"/>
</dbReference>
<dbReference type="FunFam" id="1.20.140.10:FF:000005">
    <property type="entry name" value="Acyl-coenzyme A oxidase"/>
    <property type="match status" value="1"/>
</dbReference>
<dbReference type="FunFam" id="1.20.140.10:FF:000013">
    <property type="entry name" value="Acyl-coenzyme A oxidase"/>
    <property type="match status" value="1"/>
</dbReference>
<dbReference type="FunFam" id="2.40.110.10:FF:000003">
    <property type="entry name" value="Acyl-coenzyme A oxidase"/>
    <property type="match status" value="1"/>
</dbReference>
<dbReference type="Gene3D" id="1.10.540.10">
    <property type="entry name" value="Acyl-CoA dehydrogenase/oxidase, N-terminal domain"/>
    <property type="match status" value="1"/>
</dbReference>
<dbReference type="Gene3D" id="2.40.110.10">
    <property type="entry name" value="Butyryl-CoA Dehydrogenase, subunit A, domain 2"/>
    <property type="match status" value="1"/>
</dbReference>
<dbReference type="Gene3D" id="1.20.140.10">
    <property type="entry name" value="Butyryl-CoA Dehydrogenase, subunit A, domain 3"/>
    <property type="match status" value="2"/>
</dbReference>
<dbReference type="InterPro" id="IPR034171">
    <property type="entry name" value="ACO"/>
</dbReference>
<dbReference type="InterPro" id="IPR055060">
    <property type="entry name" value="ACOX_C_alpha1"/>
</dbReference>
<dbReference type="InterPro" id="IPR029320">
    <property type="entry name" value="Acyl-CoA_ox_N"/>
</dbReference>
<dbReference type="InterPro" id="IPR006091">
    <property type="entry name" value="Acyl-CoA_Oxase/DH_mid-dom"/>
</dbReference>
<dbReference type="InterPro" id="IPR046373">
    <property type="entry name" value="Acyl-CoA_Oxase/DH_mid-dom_sf"/>
</dbReference>
<dbReference type="InterPro" id="IPR012258">
    <property type="entry name" value="Acyl-CoA_oxidase"/>
</dbReference>
<dbReference type="InterPro" id="IPR002655">
    <property type="entry name" value="Acyl-CoA_oxidase_C"/>
</dbReference>
<dbReference type="InterPro" id="IPR036250">
    <property type="entry name" value="AcylCo_DH-like_C"/>
</dbReference>
<dbReference type="InterPro" id="IPR037069">
    <property type="entry name" value="AcylCoA_DH/ox_N_sf"/>
</dbReference>
<dbReference type="InterPro" id="IPR009100">
    <property type="entry name" value="AcylCoA_DH/oxidase_NM_dom_sf"/>
</dbReference>
<dbReference type="PANTHER" id="PTHR10909">
    <property type="entry name" value="ELECTRON TRANSPORT OXIDOREDUCTASE"/>
    <property type="match status" value="1"/>
</dbReference>
<dbReference type="PANTHER" id="PTHR10909:SF250">
    <property type="entry name" value="PEROXISOMAL ACYL-COENZYME A OXIDASE 1"/>
    <property type="match status" value="1"/>
</dbReference>
<dbReference type="Pfam" id="PF01756">
    <property type="entry name" value="ACOX"/>
    <property type="match status" value="1"/>
</dbReference>
<dbReference type="Pfam" id="PF22924">
    <property type="entry name" value="ACOX_C_alpha1"/>
    <property type="match status" value="1"/>
</dbReference>
<dbReference type="Pfam" id="PF02770">
    <property type="entry name" value="Acyl-CoA_dh_M"/>
    <property type="match status" value="1"/>
</dbReference>
<dbReference type="Pfam" id="PF14749">
    <property type="entry name" value="Acyl-CoA_ox_N"/>
    <property type="match status" value="1"/>
</dbReference>
<dbReference type="PIRSF" id="PIRSF000168">
    <property type="entry name" value="Acyl-CoA_oxidase"/>
    <property type="match status" value="1"/>
</dbReference>
<dbReference type="SUPFAM" id="SSF47203">
    <property type="entry name" value="Acyl-CoA dehydrogenase C-terminal domain-like"/>
    <property type="match status" value="2"/>
</dbReference>
<dbReference type="SUPFAM" id="SSF56645">
    <property type="entry name" value="Acyl-CoA dehydrogenase NM domain-like"/>
    <property type="match status" value="1"/>
</dbReference>
<feature type="chain" id="PRO_0000348222" description="Acyl-coenzyme A oxidase 1">
    <location>
        <begin position="1"/>
        <end position="669"/>
    </location>
</feature>
<feature type="short sequence motif" description="Microbody targeting signal" evidence="3">
    <location>
        <begin position="667"/>
        <end position="669"/>
    </location>
</feature>
<feature type="active site" description="Proton acceptor" evidence="2">
    <location>
        <position position="434"/>
    </location>
</feature>
<feature type="binding site" evidence="2">
    <location>
        <position position="152"/>
    </location>
    <ligand>
        <name>FAD</name>
        <dbReference type="ChEBI" id="CHEBI:57692"/>
    </ligand>
</feature>
<feature type="binding site" evidence="2">
    <location>
        <position position="191"/>
    </location>
    <ligand>
        <name>FAD</name>
        <dbReference type="ChEBI" id="CHEBI:57692"/>
    </ligand>
</feature>
<feature type="modified residue" description="Phosphotyrosine" evidence="4">
    <location>
        <position position="544"/>
    </location>
</feature>
<feature type="modified residue" description="Phosphoserine" evidence="4">
    <location>
        <position position="551"/>
    </location>
</feature>
<feature type="mutagenesis site" description="No effect on VLCA levels. Increases dimerization. Induces a high level of ROS and severe axonal loss. Lethal." evidence="5">
    <original>N</original>
    <variation>S</variation>
    <location>
        <position position="250"/>
    </location>
</feature>
<feature type="sequence conflict" description="In Ref. 4; AAL28144." evidence="6" ref="4">
    <original>G</original>
    <variation>C</variation>
    <location>
        <position position="191"/>
    </location>
</feature>
<name>ACOX1_DROME</name>
<keyword id="KW-0274">FAD</keyword>
<keyword id="KW-0276">Fatty acid metabolism</keyword>
<keyword id="KW-0285">Flavoprotein</keyword>
<keyword id="KW-0443">Lipid metabolism</keyword>
<keyword id="KW-0539">Nucleus</keyword>
<keyword id="KW-0560">Oxidoreductase</keyword>
<keyword id="KW-0576">Peroxisome</keyword>
<keyword id="KW-0597">Phosphoprotein</keyword>
<keyword id="KW-1185">Reference proteome</keyword>
<gene>
    <name evidence="7" type="primary">Acox1</name>
    <name evidence="7" type="ORF">CG5009</name>
</gene>
<protein>
    <recommendedName>
        <fullName evidence="6">Acyl-coenzyme A oxidase 1</fullName>
        <ecNumber evidence="5">1.3.3.6</ecNumber>
    </recommendedName>
</protein>
<evidence type="ECO:0000250" key="1"/>
<evidence type="ECO:0000250" key="2">
    <source>
        <dbReference type="UniProtKB" id="P07872"/>
    </source>
</evidence>
<evidence type="ECO:0000255" key="3"/>
<evidence type="ECO:0000269" key="4">
    <source>
    </source>
</evidence>
<evidence type="ECO:0000269" key="5">
    <source>
    </source>
</evidence>
<evidence type="ECO:0000305" key="6"/>
<evidence type="ECO:0000312" key="7">
    <source>
        <dbReference type="FlyBase" id="FBgn0027572"/>
    </source>
</evidence>
<evidence type="ECO:0000312" key="8">
    <source>
        <dbReference type="Proteomes" id="UP000000803"/>
    </source>
</evidence>
<organism evidence="8">
    <name type="scientific">Drosophila melanogaster</name>
    <name type="common">Fruit fly</name>
    <dbReference type="NCBI Taxonomy" id="7227"/>
    <lineage>
        <taxon>Eukaryota</taxon>
        <taxon>Metazoa</taxon>
        <taxon>Ecdysozoa</taxon>
        <taxon>Arthropoda</taxon>
        <taxon>Hexapoda</taxon>
        <taxon>Insecta</taxon>
        <taxon>Pterygota</taxon>
        <taxon>Neoptera</taxon>
        <taxon>Endopterygota</taxon>
        <taxon>Diptera</taxon>
        <taxon>Brachycera</taxon>
        <taxon>Muscomorpha</taxon>
        <taxon>Ephydroidea</taxon>
        <taxon>Drosophilidae</taxon>
        <taxon>Drosophila</taxon>
        <taxon>Sophophora</taxon>
    </lineage>
</organism>
<sequence>MPAKPVNPDLQKERSTATFNPREFSVLWAGGEERFKEKKALEKLFLEDPALQDDLPISYLSHKELYEHSLRKACIIGEKIRKLRADGEDGVDTYNALLGGSLGSAILKEGNPLALHYVMFVPTIMGQGTMDQQVEWLSKAWDCEIIGTYAQTELGHGTFLRGLETRADYDASTQEFVINTPSLSAYKWWPGGLGHTANHAVVVAQLYTKGEFRGLAPFIVQLRDSDTHRPMPGIDIGDIGTKLGMKGVNNGYLGLKNVRVPLNNMLMKNQQVLPDGTYVAPKNSVLTYGTMMFVRCALIRDTAQSLAKASTIATRYSAVRRQSPIDPNQPEPQIMDHTTQQLKLFPQIAKAIVFKTTGDGIWNMYNVISGEIEQGNLDRLPEMHALSCCLKAICSADAAAGVETCRLSCGGHGYMDCSNFPTIYGMTTAVCTYEGENTVMLLQTARYLVKVYGQALNGEKLVPTVSYISDAINQTKFVNFDGSLRSIVKAFQFVAANKTRIAYEQIELRRKQGYGTEVAANLCGTFLTAAADLHGRAFLAQTAYTELLALSREVSPELAEVLKVVLELYLVDACLNRIGDFLRFIDLTDQDVTKLEVRLENCLKRFRPNAVSLVDSFDLHDRVLDSALGAYDGNVYEHIFESTKKNPLNKEPVNGAFHKYLKPFMKAHL</sequence>
<proteinExistence type="evidence at protein level"/>
<reference key="1">
    <citation type="journal article" date="2000" name="Science">
        <title>The genome sequence of Drosophila melanogaster.</title>
        <authorList>
            <person name="Adams M.D."/>
            <person name="Celniker S.E."/>
            <person name="Holt R.A."/>
            <person name="Evans C.A."/>
            <person name="Gocayne J.D."/>
            <person name="Amanatides P.G."/>
            <person name="Scherer S.E."/>
            <person name="Li P.W."/>
            <person name="Hoskins R.A."/>
            <person name="Galle R.F."/>
            <person name="George R.A."/>
            <person name="Lewis S.E."/>
            <person name="Richards S."/>
            <person name="Ashburner M."/>
            <person name="Henderson S.N."/>
            <person name="Sutton G.G."/>
            <person name="Wortman J.R."/>
            <person name="Yandell M.D."/>
            <person name="Zhang Q."/>
            <person name="Chen L.X."/>
            <person name="Brandon R.C."/>
            <person name="Rogers Y.-H.C."/>
            <person name="Blazej R.G."/>
            <person name="Champe M."/>
            <person name="Pfeiffer B.D."/>
            <person name="Wan K.H."/>
            <person name="Doyle C."/>
            <person name="Baxter E.G."/>
            <person name="Helt G."/>
            <person name="Nelson C.R."/>
            <person name="Miklos G.L.G."/>
            <person name="Abril J.F."/>
            <person name="Agbayani A."/>
            <person name="An H.-J."/>
            <person name="Andrews-Pfannkoch C."/>
            <person name="Baldwin D."/>
            <person name="Ballew R.M."/>
            <person name="Basu A."/>
            <person name="Baxendale J."/>
            <person name="Bayraktaroglu L."/>
            <person name="Beasley E.M."/>
            <person name="Beeson K.Y."/>
            <person name="Benos P.V."/>
            <person name="Berman B.P."/>
            <person name="Bhandari D."/>
            <person name="Bolshakov S."/>
            <person name="Borkova D."/>
            <person name="Botchan M.R."/>
            <person name="Bouck J."/>
            <person name="Brokstein P."/>
            <person name="Brottier P."/>
            <person name="Burtis K.C."/>
            <person name="Busam D.A."/>
            <person name="Butler H."/>
            <person name="Cadieu E."/>
            <person name="Center A."/>
            <person name="Chandra I."/>
            <person name="Cherry J.M."/>
            <person name="Cawley S."/>
            <person name="Dahlke C."/>
            <person name="Davenport L.B."/>
            <person name="Davies P."/>
            <person name="de Pablos B."/>
            <person name="Delcher A."/>
            <person name="Deng Z."/>
            <person name="Mays A.D."/>
            <person name="Dew I."/>
            <person name="Dietz S.M."/>
            <person name="Dodson K."/>
            <person name="Doup L.E."/>
            <person name="Downes M."/>
            <person name="Dugan-Rocha S."/>
            <person name="Dunkov B.C."/>
            <person name="Dunn P."/>
            <person name="Durbin K.J."/>
            <person name="Evangelista C.C."/>
            <person name="Ferraz C."/>
            <person name="Ferriera S."/>
            <person name="Fleischmann W."/>
            <person name="Fosler C."/>
            <person name="Gabrielian A.E."/>
            <person name="Garg N.S."/>
            <person name="Gelbart W.M."/>
            <person name="Glasser K."/>
            <person name="Glodek A."/>
            <person name="Gong F."/>
            <person name="Gorrell J.H."/>
            <person name="Gu Z."/>
            <person name="Guan P."/>
            <person name="Harris M."/>
            <person name="Harris N.L."/>
            <person name="Harvey D.A."/>
            <person name="Heiman T.J."/>
            <person name="Hernandez J.R."/>
            <person name="Houck J."/>
            <person name="Hostin D."/>
            <person name="Houston K.A."/>
            <person name="Howland T.J."/>
            <person name="Wei M.-H."/>
            <person name="Ibegwam C."/>
            <person name="Jalali M."/>
            <person name="Kalush F."/>
            <person name="Karpen G.H."/>
            <person name="Ke Z."/>
            <person name="Kennison J.A."/>
            <person name="Ketchum K.A."/>
            <person name="Kimmel B.E."/>
            <person name="Kodira C.D."/>
            <person name="Kraft C.L."/>
            <person name="Kravitz S."/>
            <person name="Kulp D."/>
            <person name="Lai Z."/>
            <person name="Lasko P."/>
            <person name="Lei Y."/>
            <person name="Levitsky A.A."/>
            <person name="Li J.H."/>
            <person name="Li Z."/>
            <person name="Liang Y."/>
            <person name="Lin X."/>
            <person name="Liu X."/>
            <person name="Mattei B."/>
            <person name="McIntosh T.C."/>
            <person name="McLeod M.P."/>
            <person name="McPherson D."/>
            <person name="Merkulov G."/>
            <person name="Milshina N.V."/>
            <person name="Mobarry C."/>
            <person name="Morris J."/>
            <person name="Moshrefi A."/>
            <person name="Mount S.M."/>
            <person name="Moy M."/>
            <person name="Murphy B."/>
            <person name="Murphy L."/>
            <person name="Muzny D.M."/>
            <person name="Nelson D.L."/>
            <person name="Nelson D.R."/>
            <person name="Nelson K.A."/>
            <person name="Nixon K."/>
            <person name="Nusskern D.R."/>
            <person name="Pacleb J.M."/>
            <person name="Palazzolo M."/>
            <person name="Pittman G.S."/>
            <person name="Pan S."/>
            <person name="Pollard J."/>
            <person name="Puri V."/>
            <person name="Reese M.G."/>
            <person name="Reinert K."/>
            <person name="Remington K."/>
            <person name="Saunders R.D.C."/>
            <person name="Scheeler F."/>
            <person name="Shen H."/>
            <person name="Shue B.C."/>
            <person name="Siden-Kiamos I."/>
            <person name="Simpson M."/>
            <person name="Skupski M.P."/>
            <person name="Smith T.J."/>
            <person name="Spier E."/>
            <person name="Spradling A.C."/>
            <person name="Stapleton M."/>
            <person name="Strong R."/>
            <person name="Sun E."/>
            <person name="Svirskas R."/>
            <person name="Tector C."/>
            <person name="Turner R."/>
            <person name="Venter E."/>
            <person name="Wang A.H."/>
            <person name="Wang X."/>
            <person name="Wang Z.-Y."/>
            <person name="Wassarman D.A."/>
            <person name="Weinstock G.M."/>
            <person name="Weissenbach J."/>
            <person name="Williams S.M."/>
            <person name="Woodage T."/>
            <person name="Worley K.C."/>
            <person name="Wu D."/>
            <person name="Yang S."/>
            <person name="Yao Q.A."/>
            <person name="Ye J."/>
            <person name="Yeh R.-F."/>
            <person name="Zaveri J.S."/>
            <person name="Zhan M."/>
            <person name="Zhang G."/>
            <person name="Zhao Q."/>
            <person name="Zheng L."/>
            <person name="Zheng X.H."/>
            <person name="Zhong F.N."/>
            <person name="Zhong W."/>
            <person name="Zhou X."/>
            <person name="Zhu S.C."/>
            <person name="Zhu X."/>
            <person name="Smith H.O."/>
            <person name="Gibbs R.A."/>
            <person name="Myers E.W."/>
            <person name="Rubin G.M."/>
            <person name="Venter J.C."/>
        </authorList>
    </citation>
    <scope>NUCLEOTIDE SEQUENCE [LARGE SCALE GENOMIC DNA]</scope>
    <source>
        <strain>Berkeley</strain>
    </source>
</reference>
<reference key="2">
    <citation type="journal article" date="2002" name="Genome Biol.">
        <title>Annotation of the Drosophila melanogaster euchromatic genome: a systematic review.</title>
        <authorList>
            <person name="Misra S."/>
            <person name="Crosby M.A."/>
            <person name="Mungall C.J."/>
            <person name="Matthews B.B."/>
            <person name="Campbell K.S."/>
            <person name="Hradecky P."/>
            <person name="Huang Y."/>
            <person name="Kaminker J.S."/>
            <person name="Millburn G.H."/>
            <person name="Prochnik S.E."/>
            <person name="Smith C.D."/>
            <person name="Tupy J.L."/>
            <person name="Whitfield E.J."/>
            <person name="Bayraktaroglu L."/>
            <person name="Berman B.P."/>
            <person name="Bettencourt B.R."/>
            <person name="Celniker S.E."/>
            <person name="de Grey A.D.N.J."/>
            <person name="Drysdale R.A."/>
            <person name="Harris N.L."/>
            <person name="Richter J."/>
            <person name="Russo S."/>
            <person name="Schroeder A.J."/>
            <person name="Shu S.Q."/>
            <person name="Stapleton M."/>
            <person name="Yamada C."/>
            <person name="Ashburner M."/>
            <person name="Gelbart W.M."/>
            <person name="Rubin G.M."/>
            <person name="Lewis S.E."/>
        </authorList>
    </citation>
    <scope>GENOME REANNOTATION</scope>
    <source>
        <strain>Berkeley</strain>
    </source>
</reference>
<reference key="3">
    <citation type="journal article" date="2000" name="Science">
        <title>A Drosophila complementary DNA resource.</title>
        <authorList>
            <person name="Rubin G.M."/>
            <person name="Hong L."/>
            <person name="Brokstein P."/>
            <person name="Evans-Holm M."/>
            <person name="Frise E."/>
            <person name="Stapleton M."/>
            <person name="Harvey D.A."/>
        </authorList>
    </citation>
    <scope>NUCLEOTIDE SEQUENCE [LARGE SCALE MRNA]</scope>
    <source>
        <strain>Berkeley</strain>
        <tissue>Head</tissue>
    </source>
</reference>
<reference key="4">
    <citation type="journal article" date="2002" name="Genome Biol.">
        <title>A Drosophila full-length cDNA resource.</title>
        <authorList>
            <person name="Stapleton M."/>
            <person name="Carlson J.W."/>
            <person name="Brokstein P."/>
            <person name="Yu C."/>
            <person name="Champe M."/>
            <person name="George R.A."/>
            <person name="Guarin H."/>
            <person name="Kronmiller B."/>
            <person name="Pacleb J.M."/>
            <person name="Park S."/>
            <person name="Wan K.H."/>
            <person name="Rubin G.M."/>
            <person name="Celniker S.E."/>
        </authorList>
    </citation>
    <scope>NUCLEOTIDE SEQUENCE [LARGE SCALE MRNA]</scope>
    <source>
        <strain>Berkeley</strain>
        <tissue>Head</tissue>
    </source>
</reference>
<reference key="5">
    <citation type="journal article" date="2007" name="Mol. Biosyst.">
        <title>An integrated chemical, mass spectrometric and computational strategy for (quantitative) phosphoproteomics: application to Drosophila melanogaster Kc167 cells.</title>
        <authorList>
            <person name="Bodenmiller B."/>
            <person name="Mueller L.N."/>
            <person name="Pedrioli P.G.A."/>
            <person name="Pflieger D."/>
            <person name="Juenger M.A."/>
            <person name="Eng J.K."/>
            <person name="Aebersold R."/>
            <person name="Tao W.A."/>
        </authorList>
    </citation>
    <scope>PHOSPHORYLATION [LARGE SCALE ANALYSIS] AT TYR-544 AND SER-551</scope>
    <scope>IDENTIFICATION BY MASS SPECTROMETRY</scope>
</reference>
<reference key="6">
    <citation type="journal article" date="2020" name="Neuron">
        <title>Loss- or Gain-of-Function Mutations in ACOX1 Cause Axonal Loss via Different Mechanisms.</title>
        <authorList>
            <consortium name="Members of Undiagnosed Diseases Network"/>
            <person name="Chung H.L."/>
            <person name="Wangler M.F."/>
            <person name="Marcogliese P.C."/>
            <person name="Jo J."/>
            <person name="Ravenscroft T.A."/>
            <person name="Zuo Z."/>
            <person name="Duraine L."/>
            <person name="Sadeghzadeh S."/>
            <person name="Li-Kroeger D."/>
            <person name="Schmidt R.E."/>
            <person name="Pestronk A."/>
            <person name="Rosenfeld J.A."/>
            <person name="Burrage L."/>
            <person name="Herndon M.J."/>
            <person name="Chen S."/>
            <person name="Shillington A."/>
            <person name="Vawter-Lee M."/>
            <person name="Hopkin R."/>
            <person name="Rodriguez-Smith J."/>
            <person name="Henrickson M."/>
            <person name="Lee B."/>
            <person name="Moser A.B."/>
            <person name="Jones R.O."/>
            <person name="Watkins P."/>
            <person name="Yoo T."/>
            <person name="Mar S."/>
            <person name="Choi M."/>
            <person name="Bucelli R.C."/>
            <person name="Yamamoto S."/>
            <person name="Lee H.K."/>
            <person name="Prada C.E."/>
            <person name="Chae J.H."/>
            <person name="Vogel T.P."/>
            <person name="Bellen H.J."/>
        </authorList>
    </citation>
    <scope>FUNCTION</scope>
    <scope>DISRUPTION PHENOTYPE</scope>
    <scope>TISSUE SPECIFICITY</scope>
    <scope>DEVELOPMENTAL STAGE</scope>
    <scope>SUBCELLULAR LOCATION</scope>
    <scope>MUTAGENESIS OF ASN-250</scope>
    <scope>CATALYTIC ACTIVITY</scope>
</reference>
<comment type="function">
    <text evidence="5">Catalyzes the desaturation of acyl-CoAs to 2-trans-enoyl-CoAs. First enzyme of the fatty acid beta-oxidation pathway.</text>
</comment>
<comment type="catalytic activity">
    <reaction evidence="5">
        <text>a 2,3-saturated acyl-CoA + O2 = a (2E)-enoyl-CoA + H2O2</text>
        <dbReference type="Rhea" id="RHEA:38959"/>
        <dbReference type="ChEBI" id="CHEBI:15379"/>
        <dbReference type="ChEBI" id="CHEBI:16240"/>
        <dbReference type="ChEBI" id="CHEBI:58856"/>
        <dbReference type="ChEBI" id="CHEBI:65111"/>
        <dbReference type="EC" id="1.3.3.6"/>
    </reaction>
    <physiologicalReaction direction="left-to-right" evidence="5">
        <dbReference type="Rhea" id="RHEA:38960"/>
    </physiologicalReaction>
</comment>
<comment type="cofactor">
    <cofactor evidence="2">
        <name>FAD</name>
        <dbReference type="ChEBI" id="CHEBI:57692"/>
    </cofactor>
</comment>
<comment type="pathway">
    <text evidence="5">Lipid metabolism; peroxisomal fatty acid beta-oxidation.</text>
</comment>
<comment type="subunit">
    <text evidence="5">Homodimer.</text>
</comment>
<comment type="subcellular location">
    <subcellularLocation>
        <location evidence="1">Peroxisome</location>
    </subcellularLocation>
    <subcellularLocation>
        <location evidence="5">Nucleus</location>
    </subcellularLocation>
</comment>
<comment type="tissue specificity">
    <text evidence="5">Expressed in glia.</text>
</comment>
<comment type="developmental stage">
    <text evidence="5">Expressed in glia.</text>
</comment>
<comment type="disruption phenotype">
    <text evidence="5">Most mutants die as pupae. They have increased VLCFA, loss of vision and have glial loss and reduced neuronal survival.</text>
</comment>
<comment type="similarity">
    <text evidence="6">Belongs to the acyl-CoA oxidase family.</text>
</comment>